<dbReference type="EMBL" id="AF157706">
    <property type="protein sequence ID" value="AAB06362.1"/>
    <property type="molecule type" value="Genomic_DNA"/>
</dbReference>
<dbReference type="PIR" id="T44224">
    <property type="entry name" value="T44224"/>
</dbReference>
<dbReference type="RefSeq" id="NP_050258.1">
    <property type="nucleotide sequence ID" value="NC_000898.1"/>
</dbReference>
<dbReference type="DNASU" id="1497079"/>
<dbReference type="GeneID" id="1497079"/>
<dbReference type="KEGG" id="vg:1497079"/>
<dbReference type="Proteomes" id="UP000006930">
    <property type="component" value="Segment"/>
</dbReference>
<name>B7_HHV6Z</name>
<feature type="chain" id="PRO_0000408398" description="Protein B7">
    <location>
        <begin position="1"/>
        <end position="75"/>
    </location>
</feature>
<proteinExistence type="predicted"/>
<organism>
    <name type="scientific">Human herpesvirus 6B (strain Z29)</name>
    <name type="common">HHV-6 variant B</name>
    <name type="synonym">Human B lymphotropic virus</name>
    <dbReference type="NCBI Taxonomy" id="36351"/>
    <lineage>
        <taxon>Viruses</taxon>
        <taxon>Duplodnaviria</taxon>
        <taxon>Heunggongvirae</taxon>
        <taxon>Peploviricota</taxon>
        <taxon>Herviviricetes</taxon>
        <taxon>Herpesvirales</taxon>
        <taxon>Orthoherpesviridae</taxon>
        <taxon>Betaherpesvirinae</taxon>
        <taxon>Roseolovirus</taxon>
        <taxon>Roseolovirus humanbeta6b</taxon>
        <taxon>Human herpesvirus 6B</taxon>
    </lineage>
</organism>
<accession>Q69066</accession>
<protein>
    <recommendedName>
        <fullName>Protein B7</fullName>
    </recommendedName>
</protein>
<gene>
    <name type="primary">B7</name>
</gene>
<organismHost>
    <name type="scientific">Homo sapiens</name>
    <name type="common">Human</name>
    <dbReference type="NCBI Taxonomy" id="9606"/>
</organismHost>
<reference key="1">
    <citation type="journal article" date="1996" name="Arch. Virol.">
        <title>Restriction endonuclease mapping and molecular cloning of the human herpesvirus 6 variant B strain Z29 genome.</title>
        <authorList>
            <person name="Lindquester G.J."/>
            <person name="Inoue N."/>
            <person name="Allen R.D."/>
            <person name="Castelli J.W."/>
            <person name="Stamey F.R."/>
            <person name="Dambaugh T.R."/>
            <person name="O'Brian J.J."/>
            <person name="Danovich R.M."/>
            <person name="Frenkel N."/>
            <person name="Pellett P.E."/>
        </authorList>
    </citation>
    <scope>NUCLEOTIDE SEQUENCE [LARGE SCALE GENOMIC DNA]</scope>
</reference>
<reference key="2">
    <citation type="journal article" date="1997" name="Arch. Virol.">
        <title>Comparison of a 20 kb region of human herpesvirus 6B with other human beta herpesviruses reveals conserved replication genes and adjacent divergent open reading frames.</title>
        <authorList>
            <person name="Lindquester G.J."/>
            <person name="Greenamoyer C.A."/>
            <person name="Anton E.D."/>
            <person name="O'Brian J.J."/>
            <person name="Pellett P.E."/>
            <person name="Dambaugh T.R."/>
        </authorList>
    </citation>
    <scope>NUCLEOTIDE SEQUENCE [LARGE SCALE GENOMIC DNA]</scope>
</reference>
<reference key="3">
    <citation type="journal article" date="1999" name="J. Virol.">
        <title>Human herpesvirus 6B genome sequence: coding content and comparison with human herpesvirus 6A.</title>
        <authorList>
            <person name="Dominguez G."/>
            <person name="Dambaugh T.R."/>
            <person name="Stamey F.R."/>
            <person name="Dewhurst S."/>
            <person name="Inoue N."/>
            <person name="Pellett P.E."/>
        </authorList>
    </citation>
    <scope>NUCLEOTIDE SEQUENCE [LARGE SCALE GENOMIC DNA]</scope>
</reference>
<sequence length="75" mass="8544">MLHNVSKCIHSICIRVCIKLHVICSSRFSIRCFAVYETYSLIPNTSDGRQAFLYAFYGKVHALVADAIRKGFRFG</sequence>
<keyword id="KW-1185">Reference proteome</keyword>